<organism>
    <name type="scientific">Kluyveromyces lactis (strain ATCC 8585 / CBS 2359 / DSM 70799 / NBRC 1267 / NRRL Y-1140 / WM37)</name>
    <name type="common">Yeast</name>
    <name type="synonym">Candida sphaerica</name>
    <dbReference type="NCBI Taxonomy" id="284590"/>
    <lineage>
        <taxon>Eukaryota</taxon>
        <taxon>Fungi</taxon>
        <taxon>Dikarya</taxon>
        <taxon>Ascomycota</taxon>
        <taxon>Saccharomycotina</taxon>
        <taxon>Saccharomycetes</taxon>
        <taxon>Saccharomycetales</taxon>
        <taxon>Saccharomycetaceae</taxon>
        <taxon>Kluyveromyces</taxon>
    </lineage>
</organism>
<feature type="chain" id="PRO_0000058547" description="Endopolyphosphatase">
    <location>
        <begin position="1"/>
        <end position="681"/>
    </location>
</feature>
<feature type="topological domain" description="Cytoplasmic" evidence="2">
    <location>
        <begin position="1"/>
        <end position="23"/>
    </location>
</feature>
<feature type="transmembrane region" description="Helical; Signal-anchor for type II membrane protein" evidence="2">
    <location>
        <begin position="24"/>
        <end position="44"/>
    </location>
</feature>
<feature type="topological domain" description="Vacuolar" evidence="2">
    <location>
        <begin position="45"/>
        <end position="681"/>
    </location>
</feature>
<feature type="region of interest" description="Disordered" evidence="3">
    <location>
        <begin position="549"/>
        <end position="585"/>
    </location>
</feature>
<feature type="compositionally biased region" description="Basic residues" evidence="3">
    <location>
        <begin position="549"/>
        <end position="562"/>
    </location>
</feature>
<feature type="glycosylation site" description="N-linked (GlcNAc...) asparagine" evidence="2">
    <location>
        <position position="127"/>
    </location>
</feature>
<feature type="glycosylation site" description="N-linked (GlcNAc...) asparagine" evidence="2">
    <location>
        <position position="173"/>
    </location>
</feature>
<feature type="glycosylation site" description="N-linked (GlcNAc...) asparagine" evidence="2">
    <location>
        <position position="309"/>
    </location>
</feature>
<feature type="glycosylation site" description="N-linked (GlcNAc...) asparagine" evidence="2">
    <location>
        <position position="487"/>
    </location>
</feature>
<proteinExistence type="inferred from homology"/>
<reference key="1">
    <citation type="journal article" date="2004" name="Nature">
        <title>Genome evolution in yeasts.</title>
        <authorList>
            <person name="Dujon B."/>
            <person name="Sherman D."/>
            <person name="Fischer G."/>
            <person name="Durrens P."/>
            <person name="Casaregola S."/>
            <person name="Lafontaine I."/>
            <person name="de Montigny J."/>
            <person name="Marck C."/>
            <person name="Neuveglise C."/>
            <person name="Talla E."/>
            <person name="Goffard N."/>
            <person name="Frangeul L."/>
            <person name="Aigle M."/>
            <person name="Anthouard V."/>
            <person name="Babour A."/>
            <person name="Barbe V."/>
            <person name="Barnay S."/>
            <person name="Blanchin S."/>
            <person name="Beckerich J.-M."/>
            <person name="Beyne E."/>
            <person name="Bleykasten C."/>
            <person name="Boisrame A."/>
            <person name="Boyer J."/>
            <person name="Cattolico L."/>
            <person name="Confanioleri F."/>
            <person name="de Daruvar A."/>
            <person name="Despons L."/>
            <person name="Fabre E."/>
            <person name="Fairhead C."/>
            <person name="Ferry-Dumazet H."/>
            <person name="Groppi A."/>
            <person name="Hantraye F."/>
            <person name="Hennequin C."/>
            <person name="Jauniaux N."/>
            <person name="Joyet P."/>
            <person name="Kachouri R."/>
            <person name="Kerrest A."/>
            <person name="Koszul R."/>
            <person name="Lemaire M."/>
            <person name="Lesur I."/>
            <person name="Ma L."/>
            <person name="Muller H."/>
            <person name="Nicaud J.-M."/>
            <person name="Nikolski M."/>
            <person name="Oztas S."/>
            <person name="Ozier-Kalogeropoulos O."/>
            <person name="Pellenz S."/>
            <person name="Potier S."/>
            <person name="Richard G.-F."/>
            <person name="Straub M.-L."/>
            <person name="Suleau A."/>
            <person name="Swennen D."/>
            <person name="Tekaia F."/>
            <person name="Wesolowski-Louvel M."/>
            <person name="Westhof E."/>
            <person name="Wirth B."/>
            <person name="Zeniou-Meyer M."/>
            <person name="Zivanovic Y."/>
            <person name="Bolotin-Fukuhara M."/>
            <person name="Thierry A."/>
            <person name="Bouchier C."/>
            <person name="Caudron B."/>
            <person name="Scarpelli C."/>
            <person name="Gaillardin C."/>
            <person name="Weissenbach J."/>
            <person name="Wincker P."/>
            <person name="Souciet J.-L."/>
        </authorList>
    </citation>
    <scope>NUCLEOTIDE SEQUENCE [LARGE SCALE GENOMIC DNA]</scope>
    <source>
        <strain>ATCC 8585 / CBS 2359 / DSM 70799 / NBRC 1267 / NRRL Y-1140 / WM37</strain>
    </source>
</reference>
<comment type="function">
    <text evidence="1">Catalyzes the hydrolysis of inorganic polyphosphate (polyP) chains of many hundreds of phosphate residues into shorter lengths.</text>
</comment>
<comment type="catalytic activity">
    <reaction evidence="1">
        <text>[phosphate](n+1) + n H2O = (n+1) phosphate + n H(+)</text>
        <dbReference type="Rhea" id="RHEA:22452"/>
        <dbReference type="Rhea" id="RHEA-COMP:14280"/>
        <dbReference type="ChEBI" id="CHEBI:15377"/>
        <dbReference type="ChEBI" id="CHEBI:15378"/>
        <dbReference type="ChEBI" id="CHEBI:16838"/>
        <dbReference type="ChEBI" id="CHEBI:43474"/>
        <dbReference type="EC" id="3.6.1.10"/>
    </reaction>
</comment>
<comment type="cofactor">
    <cofactor evidence="1">
        <name>a divalent metal cation</name>
        <dbReference type="ChEBI" id="CHEBI:60240"/>
    </cofactor>
</comment>
<comment type="subcellular location">
    <subcellularLocation>
        <location evidence="1">Vacuole membrane</location>
        <topology evidence="1">Single-pass type II membrane protein</topology>
    </subcellularLocation>
</comment>
<comment type="PTM">
    <text evidence="1">Processing by proteases in the vacuole may be required for activation.</text>
</comment>
<comment type="similarity">
    <text evidence="4">Belongs to the endopolyphosphatase PPN1 family.</text>
</comment>
<evidence type="ECO:0000250" key="1">
    <source>
        <dbReference type="UniProtKB" id="Q04119"/>
    </source>
</evidence>
<evidence type="ECO:0000255" key="2"/>
<evidence type="ECO:0000256" key="3">
    <source>
        <dbReference type="SAM" id="MobiDB-lite"/>
    </source>
</evidence>
<evidence type="ECO:0000305" key="4"/>
<sequence length="681" mass="78413">MKELQLPEKRKSNTGLSWFPSPRILQVFLVLLGAIVAFLSFSATSSIISSSPKHHSCHDNVEEAAVKYHYSTISSDELPISNERLASLGLTPNQPVKITDIGGKEKSIKGRFLHITDMHPDLYYKENTSIDDTCHRGKPKNDGDRAARFGNAMKGCDGPPDLMYYTLDWIHKNLSDEIDFIIWTGDNVRHDNDRRIPRTEQQIFDMNRQVSELFLKTFKDHESDDPRDLKVKIIPSLGNNDVFPHNLFSPGPTLQTRELYDIWSQFIPPAQQNTFDRYASFFVEAIPGKLAVISLNTLYMFKGNPLVDNCSNKKQPGYKMLLWVGFTLQELRDRGMKVWLSGHVPPIPKNFDSSCSDKLALWLHEYSDIIIGGFYGHMNMDHFIPVDGEKAWDDIANSMAISEYSGFFEQDFLEDAIAAREIRAEGAKPVKKVNYMNGVRDAYYSRISEDVKKLSEKDPLYERYSIVHIGTSIIPTFNPGFRIWEYNITELQTEEEVLHSHQPWDSFFEHLDVEIQKIIEEAEEAEEVEAFEDDEQIDSEIPDVLISKKKKKKGKKGKKNKNSKNWWKTDKTFPKKKPKNLPPGPAYENQLFSPLRFVQYYADLKEIDKQYLKLLKEGKSEDEAASIAFKYQIEYASDDKPYPMKTTLVKDYIELASELSGNDKLWDTFLERAFCSSGYED</sequence>
<name>PPN1_KLULA</name>
<accession>Q6CWT7</accession>
<keyword id="KW-0325">Glycoprotein</keyword>
<keyword id="KW-0378">Hydrolase</keyword>
<keyword id="KW-0472">Membrane</keyword>
<keyword id="KW-1185">Reference proteome</keyword>
<keyword id="KW-0735">Signal-anchor</keyword>
<keyword id="KW-0812">Transmembrane</keyword>
<keyword id="KW-1133">Transmembrane helix</keyword>
<keyword id="KW-0926">Vacuole</keyword>
<gene>
    <name type="primary">PPN1</name>
    <name type="ordered locus">KLLA0B01606g</name>
</gene>
<protein>
    <recommendedName>
        <fullName>Endopolyphosphatase</fullName>
        <ecNumber>3.6.1.10</ecNumber>
    </recommendedName>
</protein>
<dbReference type="EC" id="3.6.1.10"/>
<dbReference type="EMBL" id="CR382122">
    <property type="protein sequence ID" value="CAH01995.1"/>
    <property type="molecule type" value="Genomic_DNA"/>
</dbReference>
<dbReference type="RefSeq" id="XP_451602.1">
    <property type="nucleotide sequence ID" value="XM_451602.1"/>
</dbReference>
<dbReference type="SMR" id="Q6CWT7"/>
<dbReference type="FunCoup" id="Q6CWT7">
    <property type="interactions" value="277"/>
</dbReference>
<dbReference type="STRING" id="284590.Q6CWT7"/>
<dbReference type="GlyCosmos" id="Q6CWT7">
    <property type="glycosylation" value="4 sites, No reported glycans"/>
</dbReference>
<dbReference type="PaxDb" id="284590-Q6CWT7"/>
<dbReference type="KEGG" id="kla:KLLA0_B01606g"/>
<dbReference type="eggNOG" id="KOG3770">
    <property type="taxonomic scope" value="Eukaryota"/>
</dbReference>
<dbReference type="HOGENOM" id="CLU_013424_1_0_1"/>
<dbReference type="InParanoid" id="Q6CWT7"/>
<dbReference type="OMA" id="WAERYSV"/>
<dbReference type="Proteomes" id="UP000000598">
    <property type="component" value="Chromosome B"/>
</dbReference>
<dbReference type="GO" id="GO:0000324">
    <property type="term" value="C:fungal-type vacuole"/>
    <property type="evidence" value="ECO:0007669"/>
    <property type="project" value="TreeGrafter"/>
</dbReference>
<dbReference type="GO" id="GO:0005774">
    <property type="term" value="C:vacuolar membrane"/>
    <property type="evidence" value="ECO:0007669"/>
    <property type="project" value="UniProtKB-SubCell"/>
</dbReference>
<dbReference type="GO" id="GO:0000298">
    <property type="term" value="F:endopolyphosphatase activity"/>
    <property type="evidence" value="ECO:0007669"/>
    <property type="project" value="UniProtKB-EC"/>
</dbReference>
<dbReference type="GO" id="GO:0004309">
    <property type="term" value="F:exopolyphosphatase activity"/>
    <property type="evidence" value="ECO:0007669"/>
    <property type="project" value="TreeGrafter"/>
</dbReference>
<dbReference type="GO" id="GO:0008081">
    <property type="term" value="F:phosphoric diester hydrolase activity"/>
    <property type="evidence" value="ECO:0007669"/>
    <property type="project" value="TreeGrafter"/>
</dbReference>
<dbReference type="GO" id="GO:0006798">
    <property type="term" value="P:polyphosphate catabolic process"/>
    <property type="evidence" value="ECO:0007669"/>
    <property type="project" value="TreeGrafter"/>
</dbReference>
<dbReference type="CDD" id="cd00842">
    <property type="entry name" value="MPP_ASMase"/>
    <property type="match status" value="1"/>
</dbReference>
<dbReference type="InterPro" id="IPR041805">
    <property type="entry name" value="ASMase/PPN1_MPP"/>
</dbReference>
<dbReference type="InterPro" id="IPR004843">
    <property type="entry name" value="Calcineurin-like_PHP_ApaH"/>
</dbReference>
<dbReference type="InterPro" id="IPR012358">
    <property type="entry name" value="EndopolyPtase_N1"/>
</dbReference>
<dbReference type="InterPro" id="IPR029052">
    <property type="entry name" value="Metallo-depent_PP-like"/>
</dbReference>
<dbReference type="PANTHER" id="PTHR10340:SF55">
    <property type="entry name" value="ENDOPOLYPHOSPHATASE"/>
    <property type="match status" value="1"/>
</dbReference>
<dbReference type="PANTHER" id="PTHR10340">
    <property type="entry name" value="SPHINGOMYELIN PHOSPHODIESTERASE"/>
    <property type="match status" value="1"/>
</dbReference>
<dbReference type="Pfam" id="PF00149">
    <property type="entry name" value="Metallophos"/>
    <property type="match status" value="1"/>
</dbReference>
<dbReference type="PIRSF" id="PIRSF027093">
    <property type="entry name" value="EndopolyPtase_N1"/>
    <property type="match status" value="1"/>
</dbReference>
<dbReference type="SUPFAM" id="SSF56300">
    <property type="entry name" value="Metallo-dependent phosphatases"/>
    <property type="match status" value="1"/>
</dbReference>